<accession>B2SC15</accession>
<keyword id="KW-0012">Acyltransferase</keyword>
<keyword id="KW-0028">Amino-acid biosynthesis</keyword>
<keyword id="KW-0963">Cytoplasm</keyword>
<keyword id="KW-0220">Diaminopimelate biosynthesis</keyword>
<keyword id="KW-0457">Lysine biosynthesis</keyword>
<keyword id="KW-0677">Repeat</keyword>
<keyword id="KW-0808">Transferase</keyword>
<feature type="chain" id="PRO_1000134030" description="2,3,4,5-tetrahydropyridine-2,6-dicarboxylate N-succinyltransferase">
    <location>
        <begin position="1"/>
        <end position="284"/>
    </location>
</feature>
<name>DAPD_BRUA1</name>
<proteinExistence type="inferred from homology"/>
<dbReference type="EC" id="2.3.1.117" evidence="1"/>
<dbReference type="EMBL" id="CP000888">
    <property type="protein sequence ID" value="ACD74402.1"/>
    <property type="molecule type" value="Genomic_DNA"/>
</dbReference>
<dbReference type="RefSeq" id="WP_002965622.1">
    <property type="nucleotide sequence ID" value="NC_010740.1"/>
</dbReference>
<dbReference type="SMR" id="B2SC15"/>
<dbReference type="GeneID" id="97534922"/>
<dbReference type="KEGG" id="bmc:BAbS19_II09170"/>
<dbReference type="HOGENOM" id="CLU_050859_0_1_5"/>
<dbReference type="UniPathway" id="UPA00034">
    <property type="reaction ID" value="UER00019"/>
</dbReference>
<dbReference type="Proteomes" id="UP000002565">
    <property type="component" value="Chromosome 2"/>
</dbReference>
<dbReference type="GO" id="GO:0005737">
    <property type="term" value="C:cytoplasm"/>
    <property type="evidence" value="ECO:0007669"/>
    <property type="project" value="UniProtKB-SubCell"/>
</dbReference>
<dbReference type="GO" id="GO:0008666">
    <property type="term" value="F:2,3,4,5-tetrahydropyridine-2,6-dicarboxylate N-succinyltransferase activity"/>
    <property type="evidence" value="ECO:0007669"/>
    <property type="project" value="UniProtKB-UniRule"/>
</dbReference>
<dbReference type="GO" id="GO:0019877">
    <property type="term" value="P:diaminopimelate biosynthetic process"/>
    <property type="evidence" value="ECO:0007669"/>
    <property type="project" value="UniProtKB-UniRule"/>
</dbReference>
<dbReference type="GO" id="GO:0009089">
    <property type="term" value="P:lysine biosynthetic process via diaminopimelate"/>
    <property type="evidence" value="ECO:0007669"/>
    <property type="project" value="UniProtKB-UniRule"/>
</dbReference>
<dbReference type="CDD" id="cd03350">
    <property type="entry name" value="LbH_THP_succinylT"/>
    <property type="match status" value="1"/>
</dbReference>
<dbReference type="Gene3D" id="2.160.10.10">
    <property type="entry name" value="Hexapeptide repeat proteins"/>
    <property type="match status" value="1"/>
</dbReference>
<dbReference type="Gene3D" id="1.10.166.10">
    <property type="entry name" value="Tetrahydrodipicolinate-N-succinyltransferase, N-terminal domain"/>
    <property type="match status" value="1"/>
</dbReference>
<dbReference type="HAMAP" id="MF_00811">
    <property type="entry name" value="DapD"/>
    <property type="match status" value="1"/>
</dbReference>
<dbReference type="InterPro" id="IPR005664">
    <property type="entry name" value="DapD_Trfase_Hexpep_rpt_fam"/>
</dbReference>
<dbReference type="InterPro" id="IPR001451">
    <property type="entry name" value="Hexapep"/>
</dbReference>
<dbReference type="InterPro" id="IPR018357">
    <property type="entry name" value="Hexapep_transf_CS"/>
</dbReference>
<dbReference type="InterPro" id="IPR023180">
    <property type="entry name" value="THP_succinylTrfase_dom1"/>
</dbReference>
<dbReference type="InterPro" id="IPR037133">
    <property type="entry name" value="THP_succinylTrfase_N_sf"/>
</dbReference>
<dbReference type="InterPro" id="IPR050179">
    <property type="entry name" value="Trans_hexapeptide_repeat"/>
</dbReference>
<dbReference type="InterPro" id="IPR011004">
    <property type="entry name" value="Trimer_LpxA-like_sf"/>
</dbReference>
<dbReference type="NCBIfam" id="TIGR00965">
    <property type="entry name" value="dapD"/>
    <property type="match status" value="1"/>
</dbReference>
<dbReference type="NCBIfam" id="NF008808">
    <property type="entry name" value="PRK11830.1"/>
    <property type="match status" value="1"/>
</dbReference>
<dbReference type="PANTHER" id="PTHR43300:SF10">
    <property type="entry name" value="2,3,4,5-TETRAHYDROPYRIDINE-2,6-DICARBOXYLATE N-ACETYLTRANSFERASE"/>
    <property type="match status" value="1"/>
</dbReference>
<dbReference type="PANTHER" id="PTHR43300">
    <property type="entry name" value="ACETYLTRANSFERASE"/>
    <property type="match status" value="1"/>
</dbReference>
<dbReference type="Pfam" id="PF14602">
    <property type="entry name" value="Hexapep_2"/>
    <property type="match status" value="1"/>
</dbReference>
<dbReference type="Pfam" id="PF14805">
    <property type="entry name" value="THDPS_N_2"/>
    <property type="match status" value="1"/>
</dbReference>
<dbReference type="SUPFAM" id="SSF51161">
    <property type="entry name" value="Trimeric LpxA-like enzymes"/>
    <property type="match status" value="1"/>
</dbReference>
<dbReference type="PROSITE" id="PS00101">
    <property type="entry name" value="HEXAPEP_TRANSFERASES"/>
    <property type="match status" value="1"/>
</dbReference>
<protein>
    <recommendedName>
        <fullName evidence="1">2,3,4,5-tetrahydropyridine-2,6-dicarboxylate N-succinyltransferase</fullName>
        <ecNumber evidence="1">2.3.1.117</ecNumber>
    </recommendedName>
    <alternativeName>
        <fullName evidence="1">Tetrahydrodipicolinate N-succinyltransferase</fullName>
        <shortName evidence="1">THP succinyltransferase</shortName>
        <shortName evidence="1">Tetrahydropicolinate succinylase</shortName>
    </alternativeName>
</protein>
<gene>
    <name evidence="1" type="primary">dapD</name>
    <name type="ordered locus">BAbS19_II09170</name>
</gene>
<sequence>MTKPDLASLEKTIEKAFDERDGINTATRGEVREAVEQSLILLDRGEVRVAEKQADGNWHVNQWLKKAVLLSFRLNPMEVIKGGPGQSSWWDKVPSKFDGWTANEFEKAGFRAVPNCIVRHSAYIAPNAILMPSFVNLGAYVDKGAMIDTWATVGSCAQIGKNVHLSGGVGIGGVLEPMQAGPTIIEDNCFIGARSEVVEGCIVREGSVLGMGVFIGKSTKIVDRATGEVFYGEVPPYSVVVAGTMPGKNVPGENWGPSLYCAVIVKRADEKTRSKTSINELLRD</sequence>
<comment type="catalytic activity">
    <reaction evidence="1">
        <text>(S)-2,3,4,5-tetrahydrodipicolinate + succinyl-CoA + H2O = (S)-2-succinylamino-6-oxoheptanedioate + CoA</text>
        <dbReference type="Rhea" id="RHEA:17325"/>
        <dbReference type="ChEBI" id="CHEBI:15377"/>
        <dbReference type="ChEBI" id="CHEBI:15685"/>
        <dbReference type="ChEBI" id="CHEBI:16845"/>
        <dbReference type="ChEBI" id="CHEBI:57287"/>
        <dbReference type="ChEBI" id="CHEBI:57292"/>
        <dbReference type="EC" id="2.3.1.117"/>
    </reaction>
</comment>
<comment type="pathway">
    <text evidence="1">Amino-acid biosynthesis; L-lysine biosynthesis via DAP pathway; LL-2,6-diaminopimelate from (S)-tetrahydrodipicolinate (succinylase route): step 1/3.</text>
</comment>
<comment type="subcellular location">
    <subcellularLocation>
        <location evidence="1">Cytoplasm</location>
    </subcellularLocation>
</comment>
<comment type="similarity">
    <text evidence="1">Belongs to the transferase hexapeptide repeat family.</text>
</comment>
<organism>
    <name type="scientific">Brucella abortus (strain S19)</name>
    <dbReference type="NCBI Taxonomy" id="430066"/>
    <lineage>
        <taxon>Bacteria</taxon>
        <taxon>Pseudomonadati</taxon>
        <taxon>Pseudomonadota</taxon>
        <taxon>Alphaproteobacteria</taxon>
        <taxon>Hyphomicrobiales</taxon>
        <taxon>Brucellaceae</taxon>
        <taxon>Brucella/Ochrobactrum group</taxon>
        <taxon>Brucella</taxon>
    </lineage>
</organism>
<reference key="1">
    <citation type="journal article" date="2008" name="PLoS ONE">
        <title>Genome sequence of Brucella abortus vaccine strain S19 compared to virulent strains yields candidate virulence genes.</title>
        <authorList>
            <person name="Crasta O.R."/>
            <person name="Folkerts O."/>
            <person name="Fei Z."/>
            <person name="Mane S.P."/>
            <person name="Evans C."/>
            <person name="Martino-Catt S."/>
            <person name="Bricker B."/>
            <person name="Yu G."/>
            <person name="Du L."/>
            <person name="Sobral B.W."/>
        </authorList>
    </citation>
    <scope>NUCLEOTIDE SEQUENCE [LARGE SCALE GENOMIC DNA]</scope>
    <source>
        <strain>S19</strain>
    </source>
</reference>
<evidence type="ECO:0000255" key="1">
    <source>
        <dbReference type="HAMAP-Rule" id="MF_00811"/>
    </source>
</evidence>